<name>SYM_LISMF</name>
<evidence type="ECO:0000255" key="1">
    <source>
        <dbReference type="HAMAP-Rule" id="MF_01228"/>
    </source>
</evidence>
<proteinExistence type="inferred from homology"/>
<sequence length="665" mass="75767">MLPEEKNTFYITTPIYYPSGKAHIGHAYTTVAGDAMARYKRLKGYDVFYLTGTDEHGQKIQAKAKERGISEQEYVDEIAEGFQELWKKLEISNTDFIRTTQDRHKTSVEKIFEQLLEQGDIYLGEYEGWYSVSDEEYFTETQLEEVYKDENGKVIGGKAPSGNEVELVKEESYFFRMSKYADRLVEYYNSHPEFILPESRKNEMINNFIKPGLEDLAVSRTTFDWGIKVPGNPKHVVYVWIDALSNYITALGYNTDNDTKFQKYWPADVQIVGKEIVRFHTIYWPIMLMALDLPLPKMVFGHGWILMKDGKMSKSKGNVVDPYMLIDRYGLDALRYYLLREVPFGSDGLFTPEDFVDRVNFDLANDLGNLLNRTVAMINKYFDGEIPAYQGNVTEFDQTLVDFKNNVVKEYEGSMDHMQFSVALNQLWSLISRTNKYIDETAPWTLAKDEDKRTELASVMTHLAENLRIIAVLLQPFLTRTPGEIFLQLGLQEENLKKWDSIYGYGEIPAGTTVVKKGTPIFPRLEAEVEVTYIQDEMKGSAPAPAKEAAEVEALETPQIGIEDFDKIDLRVAEVKQVDKVKKADKLLCFQLDLGEGKLRQVLSGIAEFYQPEELIGKKVIVVSNLKPVKLRGLMSEGMILSGEKDGKLSVIEASSALPNGAKVK</sequence>
<protein>
    <recommendedName>
        <fullName evidence="1">Methionine--tRNA ligase</fullName>
        <ecNumber evidence="1">6.1.1.10</ecNumber>
    </recommendedName>
    <alternativeName>
        <fullName evidence="1">Methionyl-tRNA synthetase</fullName>
        <shortName evidence="1">MetRS</shortName>
    </alternativeName>
</protein>
<comment type="function">
    <text evidence="1">Is required not only for elongation of protein synthesis but also for the initiation of all mRNA translation through initiator tRNA(fMet) aminoacylation.</text>
</comment>
<comment type="catalytic activity">
    <reaction evidence="1">
        <text>tRNA(Met) + L-methionine + ATP = L-methionyl-tRNA(Met) + AMP + diphosphate</text>
        <dbReference type="Rhea" id="RHEA:13481"/>
        <dbReference type="Rhea" id="RHEA-COMP:9667"/>
        <dbReference type="Rhea" id="RHEA-COMP:9698"/>
        <dbReference type="ChEBI" id="CHEBI:30616"/>
        <dbReference type="ChEBI" id="CHEBI:33019"/>
        <dbReference type="ChEBI" id="CHEBI:57844"/>
        <dbReference type="ChEBI" id="CHEBI:78442"/>
        <dbReference type="ChEBI" id="CHEBI:78530"/>
        <dbReference type="ChEBI" id="CHEBI:456215"/>
        <dbReference type="EC" id="6.1.1.10"/>
    </reaction>
</comment>
<comment type="subunit">
    <text evidence="1">Homodimer.</text>
</comment>
<comment type="subcellular location">
    <subcellularLocation>
        <location evidence="1">Cytoplasm</location>
    </subcellularLocation>
</comment>
<comment type="similarity">
    <text evidence="1">Belongs to the class-I aminoacyl-tRNA synthetase family. MetG type 2B subfamily.</text>
</comment>
<organism>
    <name type="scientific">Listeria monocytogenes serotype 4b (strain F2365)</name>
    <dbReference type="NCBI Taxonomy" id="265669"/>
    <lineage>
        <taxon>Bacteria</taxon>
        <taxon>Bacillati</taxon>
        <taxon>Bacillota</taxon>
        <taxon>Bacilli</taxon>
        <taxon>Bacillales</taxon>
        <taxon>Listeriaceae</taxon>
        <taxon>Listeria</taxon>
    </lineage>
</organism>
<reference key="1">
    <citation type="journal article" date="2004" name="Nucleic Acids Res.">
        <title>Whole genome comparisons of serotype 4b and 1/2a strains of the food-borne pathogen Listeria monocytogenes reveal new insights into the core genome components of this species.</title>
        <authorList>
            <person name="Nelson K.E."/>
            <person name="Fouts D.E."/>
            <person name="Mongodin E.F."/>
            <person name="Ravel J."/>
            <person name="DeBoy R.T."/>
            <person name="Kolonay J.F."/>
            <person name="Rasko D.A."/>
            <person name="Angiuoli S.V."/>
            <person name="Gill S.R."/>
            <person name="Paulsen I.T."/>
            <person name="Peterson J.D."/>
            <person name="White O."/>
            <person name="Nelson W.C."/>
            <person name="Nierman W.C."/>
            <person name="Beanan M.J."/>
            <person name="Brinkac L.M."/>
            <person name="Daugherty S.C."/>
            <person name="Dodson R.J."/>
            <person name="Durkin A.S."/>
            <person name="Madupu R."/>
            <person name="Haft D.H."/>
            <person name="Selengut J."/>
            <person name="Van Aken S.E."/>
            <person name="Khouri H.M."/>
            <person name="Fedorova N."/>
            <person name="Forberger H.A."/>
            <person name="Tran B."/>
            <person name="Kathariou S."/>
            <person name="Wonderling L.D."/>
            <person name="Uhlich G.A."/>
            <person name="Bayles D.O."/>
            <person name="Luchansky J.B."/>
            <person name="Fraser C.M."/>
        </authorList>
    </citation>
    <scope>NUCLEOTIDE SEQUENCE [LARGE SCALE GENOMIC DNA]</scope>
    <source>
        <strain>F2365</strain>
    </source>
</reference>
<dbReference type="EC" id="6.1.1.10" evidence="1"/>
<dbReference type="EMBL" id="AE017262">
    <property type="protein sequence ID" value="AAT02975.1"/>
    <property type="molecule type" value="Genomic_DNA"/>
</dbReference>
<dbReference type="SMR" id="Q724N6"/>
<dbReference type="KEGG" id="lmf:LMOf2365_0188"/>
<dbReference type="HOGENOM" id="CLU_009710_9_4_9"/>
<dbReference type="GO" id="GO:0005737">
    <property type="term" value="C:cytoplasm"/>
    <property type="evidence" value="ECO:0007669"/>
    <property type="project" value="UniProtKB-SubCell"/>
</dbReference>
<dbReference type="GO" id="GO:0005524">
    <property type="term" value="F:ATP binding"/>
    <property type="evidence" value="ECO:0007669"/>
    <property type="project" value="UniProtKB-UniRule"/>
</dbReference>
<dbReference type="GO" id="GO:0004825">
    <property type="term" value="F:methionine-tRNA ligase activity"/>
    <property type="evidence" value="ECO:0007669"/>
    <property type="project" value="UniProtKB-UniRule"/>
</dbReference>
<dbReference type="GO" id="GO:0000049">
    <property type="term" value="F:tRNA binding"/>
    <property type="evidence" value="ECO:0007669"/>
    <property type="project" value="UniProtKB-KW"/>
</dbReference>
<dbReference type="GO" id="GO:0006431">
    <property type="term" value="P:methionyl-tRNA aminoacylation"/>
    <property type="evidence" value="ECO:0007669"/>
    <property type="project" value="UniProtKB-UniRule"/>
</dbReference>
<dbReference type="CDD" id="cd07957">
    <property type="entry name" value="Anticodon_Ia_Met"/>
    <property type="match status" value="1"/>
</dbReference>
<dbReference type="CDD" id="cd00814">
    <property type="entry name" value="MetRS_core"/>
    <property type="match status" value="1"/>
</dbReference>
<dbReference type="CDD" id="cd02800">
    <property type="entry name" value="tRNA_bind_EcMetRS_like"/>
    <property type="match status" value="1"/>
</dbReference>
<dbReference type="FunFam" id="1.10.730.10:FF:000026">
    <property type="entry name" value="Methionine--tRNA ligase"/>
    <property type="match status" value="1"/>
</dbReference>
<dbReference type="FunFam" id="2.170.220.10:FF:000002">
    <property type="entry name" value="Methionine--tRNA ligase"/>
    <property type="match status" value="1"/>
</dbReference>
<dbReference type="FunFam" id="2.40.50.140:FF:000042">
    <property type="entry name" value="Methionine--tRNA ligase"/>
    <property type="match status" value="1"/>
</dbReference>
<dbReference type="Gene3D" id="2.170.220.10">
    <property type="match status" value="1"/>
</dbReference>
<dbReference type="Gene3D" id="3.40.50.620">
    <property type="entry name" value="HUPs"/>
    <property type="match status" value="1"/>
</dbReference>
<dbReference type="Gene3D" id="1.10.730.10">
    <property type="entry name" value="Isoleucyl-tRNA Synthetase, Domain 1"/>
    <property type="match status" value="1"/>
</dbReference>
<dbReference type="Gene3D" id="2.40.50.140">
    <property type="entry name" value="Nucleic acid-binding proteins"/>
    <property type="match status" value="1"/>
</dbReference>
<dbReference type="HAMAP" id="MF_01228">
    <property type="entry name" value="Met_tRNA_synth_type2"/>
    <property type="match status" value="1"/>
</dbReference>
<dbReference type="InterPro" id="IPR041872">
    <property type="entry name" value="Anticodon_Met"/>
</dbReference>
<dbReference type="InterPro" id="IPR004495">
    <property type="entry name" value="Met-tRNA-synth_bsu_C"/>
</dbReference>
<dbReference type="InterPro" id="IPR014758">
    <property type="entry name" value="Met-tRNA_synth"/>
</dbReference>
<dbReference type="InterPro" id="IPR023457">
    <property type="entry name" value="Met-tRNA_synth_2"/>
</dbReference>
<dbReference type="InterPro" id="IPR015413">
    <property type="entry name" value="Methionyl/Leucyl_tRNA_Synth"/>
</dbReference>
<dbReference type="InterPro" id="IPR033911">
    <property type="entry name" value="MetRS_core"/>
</dbReference>
<dbReference type="InterPro" id="IPR012340">
    <property type="entry name" value="NA-bd_OB-fold"/>
</dbReference>
<dbReference type="InterPro" id="IPR014729">
    <property type="entry name" value="Rossmann-like_a/b/a_fold"/>
</dbReference>
<dbReference type="InterPro" id="IPR002547">
    <property type="entry name" value="tRNA-bd_dom"/>
</dbReference>
<dbReference type="InterPro" id="IPR009080">
    <property type="entry name" value="tRNAsynth_Ia_anticodon-bd"/>
</dbReference>
<dbReference type="NCBIfam" id="TIGR00398">
    <property type="entry name" value="metG"/>
    <property type="match status" value="1"/>
</dbReference>
<dbReference type="NCBIfam" id="TIGR00399">
    <property type="entry name" value="metG_C_term"/>
    <property type="match status" value="1"/>
</dbReference>
<dbReference type="NCBIfam" id="NF008900">
    <property type="entry name" value="PRK12267.1"/>
    <property type="match status" value="1"/>
</dbReference>
<dbReference type="PANTHER" id="PTHR43326:SF1">
    <property type="entry name" value="METHIONINE--TRNA LIGASE, MITOCHONDRIAL"/>
    <property type="match status" value="1"/>
</dbReference>
<dbReference type="PANTHER" id="PTHR43326">
    <property type="entry name" value="METHIONYL-TRNA SYNTHETASE"/>
    <property type="match status" value="1"/>
</dbReference>
<dbReference type="Pfam" id="PF19303">
    <property type="entry name" value="Anticodon_3"/>
    <property type="match status" value="1"/>
</dbReference>
<dbReference type="Pfam" id="PF09334">
    <property type="entry name" value="tRNA-synt_1g"/>
    <property type="match status" value="1"/>
</dbReference>
<dbReference type="Pfam" id="PF01588">
    <property type="entry name" value="tRNA_bind"/>
    <property type="match status" value="1"/>
</dbReference>
<dbReference type="PRINTS" id="PR01041">
    <property type="entry name" value="TRNASYNTHMET"/>
</dbReference>
<dbReference type="SUPFAM" id="SSF47323">
    <property type="entry name" value="Anticodon-binding domain of a subclass of class I aminoacyl-tRNA synthetases"/>
    <property type="match status" value="1"/>
</dbReference>
<dbReference type="SUPFAM" id="SSF50249">
    <property type="entry name" value="Nucleic acid-binding proteins"/>
    <property type="match status" value="1"/>
</dbReference>
<dbReference type="SUPFAM" id="SSF52374">
    <property type="entry name" value="Nucleotidylyl transferase"/>
    <property type="match status" value="1"/>
</dbReference>
<dbReference type="PROSITE" id="PS50886">
    <property type="entry name" value="TRBD"/>
    <property type="match status" value="1"/>
</dbReference>
<feature type="chain" id="PRO_0000139226" description="Methionine--tRNA ligase">
    <location>
        <begin position="1"/>
        <end position="665"/>
    </location>
</feature>
<feature type="domain" description="tRNA-binding" evidence="1">
    <location>
        <begin position="564"/>
        <end position="665"/>
    </location>
</feature>
<feature type="short sequence motif" description="'HIGH' region">
    <location>
        <begin position="16"/>
        <end position="26"/>
    </location>
</feature>
<feature type="short sequence motif" description="'KMSKS' region">
    <location>
        <begin position="311"/>
        <end position="315"/>
    </location>
</feature>
<feature type="binding site" evidence="1">
    <location>
        <position position="314"/>
    </location>
    <ligand>
        <name>ATP</name>
        <dbReference type="ChEBI" id="CHEBI:30616"/>
    </ligand>
</feature>
<keyword id="KW-0030">Aminoacyl-tRNA synthetase</keyword>
<keyword id="KW-0067">ATP-binding</keyword>
<keyword id="KW-0963">Cytoplasm</keyword>
<keyword id="KW-0436">Ligase</keyword>
<keyword id="KW-0547">Nucleotide-binding</keyword>
<keyword id="KW-0648">Protein biosynthesis</keyword>
<keyword id="KW-0694">RNA-binding</keyword>
<keyword id="KW-0820">tRNA-binding</keyword>
<accession>Q724N6</accession>
<gene>
    <name evidence="1" type="primary">metG</name>
    <name type="ordered locus">LMOf2365_0188</name>
</gene>